<accession>Q9BYS8</accession>
<accession>B2RDQ7</accession>
<accession>Q96LT5</accession>
<reference key="1">
    <citation type="journal article" date="2002" name="Eur. J. Hum. Genet.">
        <title>The transcriptional map of the common eliminated region 1 (C3CER1) in 3p21.3.</title>
        <authorList>
            <person name="Kiss H."/>
            <person name="Yang Y."/>
            <person name="Kiss C."/>
            <person name="Andersson K."/>
            <person name="Klein G."/>
            <person name="Imreh S."/>
            <person name="Dumanski J.P."/>
        </authorList>
    </citation>
    <scope>NUCLEOTIDE SEQUENCE [MRNA]</scope>
    <scope>VARIANT GLU-145</scope>
</reference>
<reference key="2">
    <citation type="journal article" date="2004" name="Nat. Genet.">
        <title>Complete sequencing and characterization of 21,243 full-length human cDNAs.</title>
        <authorList>
            <person name="Ota T."/>
            <person name="Suzuki Y."/>
            <person name="Nishikawa T."/>
            <person name="Otsuki T."/>
            <person name="Sugiyama T."/>
            <person name="Irie R."/>
            <person name="Wakamatsu A."/>
            <person name="Hayashi K."/>
            <person name="Sato H."/>
            <person name="Nagai K."/>
            <person name="Kimura K."/>
            <person name="Makita H."/>
            <person name="Sekine M."/>
            <person name="Obayashi M."/>
            <person name="Nishi T."/>
            <person name="Shibahara T."/>
            <person name="Tanaka T."/>
            <person name="Ishii S."/>
            <person name="Yamamoto J."/>
            <person name="Saito K."/>
            <person name="Kawai Y."/>
            <person name="Isono Y."/>
            <person name="Nakamura Y."/>
            <person name="Nagahari K."/>
            <person name="Murakami K."/>
            <person name="Yasuda T."/>
            <person name="Iwayanagi T."/>
            <person name="Wagatsuma M."/>
            <person name="Shiratori A."/>
            <person name="Sudo H."/>
            <person name="Hosoiri T."/>
            <person name="Kaku Y."/>
            <person name="Kodaira H."/>
            <person name="Kondo H."/>
            <person name="Sugawara M."/>
            <person name="Takahashi M."/>
            <person name="Kanda K."/>
            <person name="Yokoi T."/>
            <person name="Furuya T."/>
            <person name="Kikkawa E."/>
            <person name="Omura Y."/>
            <person name="Abe K."/>
            <person name="Kamihara K."/>
            <person name="Katsuta N."/>
            <person name="Sato K."/>
            <person name="Tanikawa M."/>
            <person name="Yamazaki M."/>
            <person name="Ninomiya K."/>
            <person name="Ishibashi T."/>
            <person name="Yamashita H."/>
            <person name="Murakawa K."/>
            <person name="Fujimori K."/>
            <person name="Tanai H."/>
            <person name="Kimata M."/>
            <person name="Watanabe M."/>
            <person name="Hiraoka S."/>
            <person name="Chiba Y."/>
            <person name="Ishida S."/>
            <person name="Ono Y."/>
            <person name="Takiguchi S."/>
            <person name="Watanabe S."/>
            <person name="Yosida M."/>
            <person name="Hotuta T."/>
            <person name="Kusano J."/>
            <person name="Kanehori K."/>
            <person name="Takahashi-Fujii A."/>
            <person name="Hara H."/>
            <person name="Tanase T.-O."/>
            <person name="Nomura Y."/>
            <person name="Togiya S."/>
            <person name="Komai F."/>
            <person name="Hara R."/>
            <person name="Takeuchi K."/>
            <person name="Arita M."/>
            <person name="Imose N."/>
            <person name="Musashino K."/>
            <person name="Yuuki H."/>
            <person name="Oshima A."/>
            <person name="Sasaki N."/>
            <person name="Aotsuka S."/>
            <person name="Yoshikawa Y."/>
            <person name="Matsunawa H."/>
            <person name="Ichihara T."/>
            <person name="Shiohata N."/>
            <person name="Sano S."/>
            <person name="Moriya S."/>
            <person name="Momiyama H."/>
            <person name="Satoh N."/>
            <person name="Takami S."/>
            <person name="Terashima Y."/>
            <person name="Suzuki O."/>
            <person name="Nakagawa S."/>
            <person name="Senoh A."/>
            <person name="Mizoguchi H."/>
            <person name="Goto Y."/>
            <person name="Shimizu F."/>
            <person name="Wakebe H."/>
            <person name="Hishigaki H."/>
            <person name="Watanabe T."/>
            <person name="Sugiyama A."/>
            <person name="Takemoto M."/>
            <person name="Kawakami B."/>
            <person name="Yamazaki M."/>
            <person name="Watanabe K."/>
            <person name="Kumagai A."/>
            <person name="Itakura S."/>
            <person name="Fukuzumi Y."/>
            <person name="Fujimori Y."/>
            <person name="Komiyama M."/>
            <person name="Tashiro H."/>
            <person name="Tanigami A."/>
            <person name="Fujiwara T."/>
            <person name="Ono T."/>
            <person name="Yamada K."/>
            <person name="Fujii Y."/>
            <person name="Ozaki K."/>
            <person name="Hirao M."/>
            <person name="Ohmori Y."/>
            <person name="Kawabata A."/>
            <person name="Hikiji T."/>
            <person name="Kobatake N."/>
            <person name="Inagaki H."/>
            <person name="Ikema Y."/>
            <person name="Okamoto S."/>
            <person name="Okitani R."/>
            <person name="Kawakami T."/>
            <person name="Noguchi S."/>
            <person name="Itoh T."/>
            <person name="Shigeta K."/>
            <person name="Senba T."/>
            <person name="Matsumura K."/>
            <person name="Nakajima Y."/>
            <person name="Mizuno T."/>
            <person name="Morinaga M."/>
            <person name="Sasaki M."/>
            <person name="Togashi T."/>
            <person name="Oyama M."/>
            <person name="Hata H."/>
            <person name="Watanabe M."/>
            <person name="Komatsu T."/>
            <person name="Mizushima-Sugano J."/>
            <person name="Satoh T."/>
            <person name="Shirai Y."/>
            <person name="Takahashi Y."/>
            <person name="Nakagawa K."/>
            <person name="Okumura K."/>
            <person name="Nagase T."/>
            <person name="Nomura N."/>
            <person name="Kikuchi H."/>
            <person name="Masuho Y."/>
            <person name="Yamashita R."/>
            <person name="Nakai K."/>
            <person name="Yada T."/>
            <person name="Nakamura Y."/>
            <person name="Ohara O."/>
            <person name="Isogai T."/>
            <person name="Sugano S."/>
        </authorList>
    </citation>
    <scope>NUCLEOTIDE SEQUENCE [LARGE SCALE MRNA]</scope>
    <scope>VARIANT ALA-32</scope>
    <source>
        <tissue>Cerebellum</tissue>
        <tissue>Synovium</tissue>
    </source>
</reference>
<reference key="3">
    <citation type="journal article" date="2004" name="Genome Res.">
        <title>The status, quality, and expansion of the NIH full-length cDNA project: the Mammalian Gene Collection (MGC).</title>
        <authorList>
            <consortium name="The MGC Project Team"/>
        </authorList>
    </citation>
    <scope>NUCLEOTIDE SEQUENCE [LARGE SCALE MRNA]</scope>
    <source>
        <tissue>Colon</tissue>
        <tissue>Kidney</tissue>
        <tissue>Stomach</tissue>
    </source>
</reference>
<sequence>MGHKVVVFDISVIRALWETRVKKHKAWQKKEVERLEKSALEKIKEEWNFVAECRRKGIPQAVYCKNGFIDTSVRLLDKIERNTLTRQSSLPKDRGKRSSAFVFELSGEHWTELPDSLKEQTHLREWYISNTLIQIIPTYIQLFQAMRILDLPKNQISHLPAEIGCLKNLKELNVGFNYLKSIPPELGDCENLERLDCSGNLELMELPFELSNLKQVTFVDISANKFSSVPICVLRMSNLQWLDISSNNLTDLPQDIDRLEELQSFLLYKNKLTYLPYSMLNLKKLTLLVVSGDHLVELPTALCDSSTPLKFVSLMDNPIDNAQCEDGNEIMESERDRQHFDKEVMKAYIEDLKERESVPSYTTKVSFSLQL</sequence>
<keyword id="KW-0433">Leucine-rich repeat</keyword>
<keyword id="KW-1267">Proteomics identification</keyword>
<keyword id="KW-1185">Reference proteome</keyword>
<keyword id="KW-0677">Repeat</keyword>
<evidence type="ECO:0000269" key="1">
    <source>
    </source>
</evidence>
<evidence type="ECO:0000269" key="2">
    <source>
    </source>
</evidence>
<evidence type="ECO:0000305" key="3"/>
<feature type="chain" id="PRO_0000084491" description="Leucine-rich repeat-containing protein 2">
    <location>
        <begin position="1"/>
        <end position="371"/>
    </location>
</feature>
<feature type="repeat" description="LRR 1">
    <location>
        <begin position="122"/>
        <end position="143"/>
    </location>
</feature>
<feature type="repeat" description="LRR 2">
    <location>
        <begin position="145"/>
        <end position="166"/>
    </location>
</feature>
<feature type="repeat" description="LRR 3">
    <location>
        <begin position="168"/>
        <end position="189"/>
    </location>
</feature>
<feature type="repeat" description="LRR 4">
    <location>
        <begin position="191"/>
        <end position="214"/>
    </location>
</feature>
<feature type="repeat" description="LRR 5">
    <location>
        <begin position="215"/>
        <end position="235"/>
    </location>
</feature>
<feature type="repeat" description="LRR 6">
    <location>
        <begin position="238"/>
        <end position="260"/>
    </location>
</feature>
<feature type="repeat" description="LRR 7">
    <location>
        <begin position="261"/>
        <end position="283"/>
    </location>
</feature>
<feature type="repeat" description="LRR 8">
    <location>
        <begin position="284"/>
        <end position="305"/>
    </location>
</feature>
<feature type="repeat" description="LRR 9">
    <location>
        <begin position="308"/>
        <end position="329"/>
    </location>
</feature>
<feature type="sequence variant" id="VAR_051140" description="In dbSNP:rs28687398." evidence="2">
    <original>V</original>
    <variation>A</variation>
    <location>
        <position position="32"/>
    </location>
</feature>
<feature type="sequence variant" id="VAR_051141" description="In dbSNP:rs17286758.">
    <original>T</original>
    <variation>A</variation>
    <location>
        <position position="83"/>
    </location>
</feature>
<feature type="sequence variant" id="VAR_051142" description="In dbSNP:rs17078944." evidence="1">
    <original>A</original>
    <variation>E</variation>
    <location>
        <position position="145"/>
    </location>
</feature>
<feature type="sequence conflict" description="In Ref. 2; BAB71585." evidence="3" ref="2">
    <original>K</original>
    <variation>R</variation>
    <location>
        <position position="30"/>
    </location>
</feature>
<name>LRRC2_HUMAN</name>
<organism>
    <name type="scientific">Homo sapiens</name>
    <name type="common">Human</name>
    <dbReference type="NCBI Taxonomy" id="9606"/>
    <lineage>
        <taxon>Eukaryota</taxon>
        <taxon>Metazoa</taxon>
        <taxon>Chordata</taxon>
        <taxon>Craniata</taxon>
        <taxon>Vertebrata</taxon>
        <taxon>Euteleostomi</taxon>
        <taxon>Mammalia</taxon>
        <taxon>Eutheria</taxon>
        <taxon>Euarchontoglires</taxon>
        <taxon>Primates</taxon>
        <taxon>Haplorrhini</taxon>
        <taxon>Catarrhini</taxon>
        <taxon>Hominidae</taxon>
        <taxon>Homo</taxon>
    </lineage>
</organism>
<gene>
    <name type="primary">LRRC2</name>
</gene>
<protein>
    <recommendedName>
        <fullName>Leucine-rich repeat-containing protein 2</fullName>
    </recommendedName>
</protein>
<dbReference type="EMBL" id="AJ308569">
    <property type="protein sequence ID" value="CAC33442.1"/>
    <property type="molecule type" value="mRNA"/>
</dbReference>
<dbReference type="EMBL" id="AK057808">
    <property type="protein sequence ID" value="BAB71585.1"/>
    <property type="molecule type" value="mRNA"/>
</dbReference>
<dbReference type="EMBL" id="AK315636">
    <property type="protein sequence ID" value="BAG38004.1"/>
    <property type="molecule type" value="mRNA"/>
</dbReference>
<dbReference type="EMBL" id="BC029118">
    <property type="protein sequence ID" value="AAH29118.1"/>
    <property type="molecule type" value="mRNA"/>
</dbReference>
<dbReference type="CCDS" id="CCDS2741.1"/>
<dbReference type="RefSeq" id="NP_078788.2">
    <property type="nucleotide sequence ID" value="NM_024512.5"/>
</dbReference>
<dbReference type="RefSeq" id="XP_011532412.1">
    <property type="nucleotide sequence ID" value="XM_011534110.2"/>
</dbReference>
<dbReference type="SMR" id="Q9BYS8"/>
<dbReference type="BioGRID" id="122668">
    <property type="interactions" value="2"/>
</dbReference>
<dbReference type="FunCoup" id="Q9BYS8">
    <property type="interactions" value="59"/>
</dbReference>
<dbReference type="IntAct" id="Q9BYS8">
    <property type="interactions" value="3"/>
</dbReference>
<dbReference type="STRING" id="9606.ENSP00000379241"/>
<dbReference type="GlyGen" id="Q9BYS8">
    <property type="glycosylation" value="1 site, 1 O-linked glycan (1 site)"/>
</dbReference>
<dbReference type="iPTMnet" id="Q9BYS8"/>
<dbReference type="PhosphoSitePlus" id="Q9BYS8"/>
<dbReference type="BioMuta" id="LRRC2"/>
<dbReference type="DMDM" id="23821855"/>
<dbReference type="MassIVE" id="Q9BYS8"/>
<dbReference type="PaxDb" id="9606-ENSP00000379241"/>
<dbReference type="PeptideAtlas" id="Q9BYS8"/>
<dbReference type="ProteomicsDB" id="79700"/>
<dbReference type="Antibodypedia" id="29724">
    <property type="antibodies" value="147 antibodies from 20 providers"/>
</dbReference>
<dbReference type="DNASU" id="79442"/>
<dbReference type="Ensembl" id="ENST00000296144.3">
    <property type="protein sequence ID" value="ENSP00000296144.3"/>
    <property type="gene ID" value="ENSG00000163827.14"/>
</dbReference>
<dbReference type="Ensembl" id="ENST00000395905.8">
    <property type="protein sequence ID" value="ENSP00000379241.3"/>
    <property type="gene ID" value="ENSG00000163827.14"/>
</dbReference>
<dbReference type="Ensembl" id="ENST00000682605.1">
    <property type="protein sequence ID" value="ENSP00000507018.1"/>
    <property type="gene ID" value="ENSG00000163827.14"/>
</dbReference>
<dbReference type="GeneID" id="79442"/>
<dbReference type="KEGG" id="hsa:79442"/>
<dbReference type="MANE-Select" id="ENST00000395905.8">
    <property type="protein sequence ID" value="ENSP00000379241.3"/>
    <property type="RefSeq nucleotide sequence ID" value="NM_024512.5"/>
    <property type="RefSeq protein sequence ID" value="NP_078788.2"/>
</dbReference>
<dbReference type="UCSC" id="uc003cpu.5">
    <property type="organism name" value="human"/>
</dbReference>
<dbReference type="AGR" id="HGNC:14676"/>
<dbReference type="CTD" id="79442"/>
<dbReference type="DisGeNET" id="79442"/>
<dbReference type="GeneCards" id="LRRC2"/>
<dbReference type="HGNC" id="HGNC:14676">
    <property type="gene designation" value="LRRC2"/>
</dbReference>
<dbReference type="HPA" id="ENSG00000163827">
    <property type="expression patterns" value="Group enriched (heart muscle, skeletal muscle, tongue)"/>
</dbReference>
<dbReference type="MIM" id="607180">
    <property type="type" value="gene"/>
</dbReference>
<dbReference type="neXtProt" id="NX_Q9BYS8"/>
<dbReference type="OpenTargets" id="ENSG00000163827"/>
<dbReference type="PharmGKB" id="PA30461"/>
<dbReference type="VEuPathDB" id="HostDB:ENSG00000163827"/>
<dbReference type="eggNOG" id="KOG0619">
    <property type="taxonomic scope" value="Eukaryota"/>
</dbReference>
<dbReference type="GeneTree" id="ENSGT00940000154960"/>
<dbReference type="HOGENOM" id="CLU_000288_18_8_1"/>
<dbReference type="InParanoid" id="Q9BYS8"/>
<dbReference type="OMA" id="PIDNTQC"/>
<dbReference type="OrthoDB" id="660555at2759"/>
<dbReference type="PAN-GO" id="Q9BYS8">
    <property type="GO annotations" value="4 GO annotations based on evolutionary models"/>
</dbReference>
<dbReference type="PhylomeDB" id="Q9BYS8"/>
<dbReference type="TreeFam" id="TF333627"/>
<dbReference type="PathwayCommons" id="Q9BYS8"/>
<dbReference type="SignaLink" id="Q9BYS8"/>
<dbReference type="BioGRID-ORCS" id="79442">
    <property type="hits" value="44 hits in 1149 CRISPR screens"/>
</dbReference>
<dbReference type="ChiTaRS" id="LRRC2">
    <property type="organism name" value="human"/>
</dbReference>
<dbReference type="GenomeRNAi" id="79442"/>
<dbReference type="Pharos" id="Q9BYS8">
    <property type="development level" value="Tdark"/>
</dbReference>
<dbReference type="PRO" id="PR:Q9BYS8"/>
<dbReference type="Proteomes" id="UP000005640">
    <property type="component" value="Chromosome 3"/>
</dbReference>
<dbReference type="RNAct" id="Q9BYS8">
    <property type="molecule type" value="protein"/>
</dbReference>
<dbReference type="Bgee" id="ENSG00000163827">
    <property type="expression patterns" value="Expressed in skeletal muscle tissue of rectus abdominis and 147 other cell types or tissues"/>
</dbReference>
<dbReference type="GO" id="GO:0035556">
    <property type="term" value="P:intracellular signal transduction"/>
    <property type="evidence" value="ECO:0000318"/>
    <property type="project" value="GO_Central"/>
</dbReference>
<dbReference type="FunFam" id="3.80.10.10:FF:000249">
    <property type="entry name" value="Leucine rich repeat containing 39"/>
    <property type="match status" value="1"/>
</dbReference>
<dbReference type="FunFam" id="3.80.10.10:FF:000425">
    <property type="entry name" value="Leucine-rich repeat-containing protein 2"/>
    <property type="match status" value="1"/>
</dbReference>
<dbReference type="Gene3D" id="3.80.10.10">
    <property type="entry name" value="Ribonuclease Inhibitor"/>
    <property type="match status" value="2"/>
</dbReference>
<dbReference type="InterPro" id="IPR001611">
    <property type="entry name" value="Leu-rich_rpt"/>
</dbReference>
<dbReference type="InterPro" id="IPR025875">
    <property type="entry name" value="Leu-rich_rpt_4"/>
</dbReference>
<dbReference type="InterPro" id="IPR003591">
    <property type="entry name" value="Leu-rich_rpt_typical-subtyp"/>
</dbReference>
<dbReference type="InterPro" id="IPR032675">
    <property type="entry name" value="LRR_dom_sf"/>
</dbReference>
<dbReference type="InterPro" id="IPR050216">
    <property type="entry name" value="LRR_domain-containing"/>
</dbReference>
<dbReference type="PANTHER" id="PTHR48051">
    <property type="match status" value="1"/>
</dbReference>
<dbReference type="PANTHER" id="PTHR48051:SF16">
    <property type="entry name" value="LEUCINE-RICH REPEAT-CONTAINING PROTEIN 2"/>
    <property type="match status" value="1"/>
</dbReference>
<dbReference type="Pfam" id="PF12799">
    <property type="entry name" value="LRR_4"/>
    <property type="match status" value="1"/>
</dbReference>
<dbReference type="Pfam" id="PF13855">
    <property type="entry name" value="LRR_8"/>
    <property type="match status" value="1"/>
</dbReference>
<dbReference type="SMART" id="SM00364">
    <property type="entry name" value="LRR_BAC"/>
    <property type="match status" value="3"/>
</dbReference>
<dbReference type="SMART" id="SM00369">
    <property type="entry name" value="LRR_TYP"/>
    <property type="match status" value="4"/>
</dbReference>
<dbReference type="SUPFAM" id="SSF52058">
    <property type="entry name" value="L domain-like"/>
    <property type="match status" value="1"/>
</dbReference>
<dbReference type="PROSITE" id="PS51450">
    <property type="entry name" value="LRR"/>
    <property type="match status" value="4"/>
</dbReference>
<proteinExistence type="evidence at protein level"/>